<organism>
    <name type="scientific">Exiguobacterium sibiricum (strain DSM 17290 / CCUG 55495 / CIP 109462 / JCM 13490 / 255-15)</name>
    <dbReference type="NCBI Taxonomy" id="262543"/>
    <lineage>
        <taxon>Bacteria</taxon>
        <taxon>Bacillati</taxon>
        <taxon>Bacillota</taxon>
        <taxon>Bacilli</taxon>
        <taxon>Bacillales</taxon>
        <taxon>Bacillales Family XII. Incertae Sedis</taxon>
        <taxon>Exiguobacterium</taxon>
    </lineage>
</organism>
<dbReference type="EC" id="5.4.3.8" evidence="1"/>
<dbReference type="EMBL" id="CP001022">
    <property type="protein sequence ID" value="ACB60139.1"/>
    <property type="molecule type" value="Genomic_DNA"/>
</dbReference>
<dbReference type="RefSeq" id="WP_012369563.1">
    <property type="nucleotide sequence ID" value="NC_010556.1"/>
</dbReference>
<dbReference type="SMR" id="B1YK58"/>
<dbReference type="STRING" id="262543.Exig_0658"/>
<dbReference type="KEGG" id="esi:Exig_0658"/>
<dbReference type="eggNOG" id="COG0001">
    <property type="taxonomic scope" value="Bacteria"/>
</dbReference>
<dbReference type="HOGENOM" id="CLU_016922_1_5_9"/>
<dbReference type="OrthoDB" id="9807885at2"/>
<dbReference type="UniPathway" id="UPA00251">
    <property type="reaction ID" value="UER00317"/>
</dbReference>
<dbReference type="Proteomes" id="UP000001681">
    <property type="component" value="Chromosome"/>
</dbReference>
<dbReference type="GO" id="GO:0005737">
    <property type="term" value="C:cytoplasm"/>
    <property type="evidence" value="ECO:0007669"/>
    <property type="project" value="UniProtKB-SubCell"/>
</dbReference>
<dbReference type="GO" id="GO:0042286">
    <property type="term" value="F:glutamate-1-semialdehyde 2,1-aminomutase activity"/>
    <property type="evidence" value="ECO:0007669"/>
    <property type="project" value="UniProtKB-UniRule"/>
</dbReference>
<dbReference type="GO" id="GO:0030170">
    <property type="term" value="F:pyridoxal phosphate binding"/>
    <property type="evidence" value="ECO:0007669"/>
    <property type="project" value="InterPro"/>
</dbReference>
<dbReference type="GO" id="GO:0008483">
    <property type="term" value="F:transaminase activity"/>
    <property type="evidence" value="ECO:0007669"/>
    <property type="project" value="InterPro"/>
</dbReference>
<dbReference type="GO" id="GO:0006782">
    <property type="term" value="P:protoporphyrinogen IX biosynthetic process"/>
    <property type="evidence" value="ECO:0007669"/>
    <property type="project" value="UniProtKB-UniRule"/>
</dbReference>
<dbReference type="CDD" id="cd00610">
    <property type="entry name" value="OAT_like"/>
    <property type="match status" value="1"/>
</dbReference>
<dbReference type="FunFam" id="3.40.640.10:FF:000021">
    <property type="entry name" value="Glutamate-1-semialdehyde 2,1-aminomutase"/>
    <property type="match status" value="1"/>
</dbReference>
<dbReference type="Gene3D" id="3.90.1150.10">
    <property type="entry name" value="Aspartate Aminotransferase, domain 1"/>
    <property type="match status" value="1"/>
</dbReference>
<dbReference type="Gene3D" id="3.40.640.10">
    <property type="entry name" value="Type I PLP-dependent aspartate aminotransferase-like (Major domain)"/>
    <property type="match status" value="1"/>
</dbReference>
<dbReference type="HAMAP" id="MF_00375">
    <property type="entry name" value="HemL_aminotrans_3"/>
    <property type="match status" value="1"/>
</dbReference>
<dbReference type="InterPro" id="IPR004639">
    <property type="entry name" value="4pyrrol_synth_GluAld_NH2Trfase"/>
</dbReference>
<dbReference type="InterPro" id="IPR005814">
    <property type="entry name" value="Aminotrans_3"/>
</dbReference>
<dbReference type="InterPro" id="IPR015424">
    <property type="entry name" value="PyrdxlP-dep_Trfase"/>
</dbReference>
<dbReference type="InterPro" id="IPR015421">
    <property type="entry name" value="PyrdxlP-dep_Trfase_major"/>
</dbReference>
<dbReference type="InterPro" id="IPR015422">
    <property type="entry name" value="PyrdxlP-dep_Trfase_small"/>
</dbReference>
<dbReference type="NCBIfam" id="TIGR00713">
    <property type="entry name" value="hemL"/>
    <property type="match status" value="1"/>
</dbReference>
<dbReference type="NCBIfam" id="NF000818">
    <property type="entry name" value="PRK00062.1"/>
    <property type="match status" value="1"/>
</dbReference>
<dbReference type="NCBIfam" id="NF009055">
    <property type="entry name" value="PRK12389.1"/>
    <property type="match status" value="1"/>
</dbReference>
<dbReference type="PANTHER" id="PTHR43713">
    <property type="entry name" value="GLUTAMATE-1-SEMIALDEHYDE 2,1-AMINOMUTASE"/>
    <property type="match status" value="1"/>
</dbReference>
<dbReference type="PANTHER" id="PTHR43713:SF1">
    <property type="entry name" value="GLUTAMATE-1-SEMIALDEHYDE 2,1-AMINOMUTASE 2"/>
    <property type="match status" value="1"/>
</dbReference>
<dbReference type="Pfam" id="PF00202">
    <property type="entry name" value="Aminotran_3"/>
    <property type="match status" value="1"/>
</dbReference>
<dbReference type="SUPFAM" id="SSF53383">
    <property type="entry name" value="PLP-dependent transferases"/>
    <property type="match status" value="1"/>
</dbReference>
<comment type="catalytic activity">
    <reaction evidence="1">
        <text>(S)-4-amino-5-oxopentanoate = 5-aminolevulinate</text>
        <dbReference type="Rhea" id="RHEA:14265"/>
        <dbReference type="ChEBI" id="CHEBI:57501"/>
        <dbReference type="ChEBI" id="CHEBI:356416"/>
        <dbReference type="EC" id="5.4.3.8"/>
    </reaction>
</comment>
<comment type="cofactor">
    <cofactor evidence="1">
        <name>pyridoxal 5'-phosphate</name>
        <dbReference type="ChEBI" id="CHEBI:597326"/>
    </cofactor>
</comment>
<comment type="pathway">
    <text evidence="1">Porphyrin-containing compound metabolism; protoporphyrin-IX biosynthesis; 5-aminolevulinate from L-glutamyl-tRNA(Glu): step 2/2.</text>
</comment>
<comment type="subunit">
    <text evidence="1">Homodimer.</text>
</comment>
<comment type="subcellular location">
    <subcellularLocation>
        <location evidence="1">Cytoplasm</location>
    </subcellularLocation>
</comment>
<comment type="similarity">
    <text evidence="1">Belongs to the class-III pyridoxal-phosphate-dependent aminotransferase family. HemL subfamily.</text>
</comment>
<keyword id="KW-0963">Cytoplasm</keyword>
<keyword id="KW-0413">Isomerase</keyword>
<keyword id="KW-0627">Porphyrin biosynthesis</keyword>
<keyword id="KW-0663">Pyridoxal phosphate</keyword>
<keyword id="KW-1185">Reference proteome</keyword>
<protein>
    <recommendedName>
        <fullName evidence="1">Glutamate-1-semialdehyde 2,1-aminomutase 1</fullName>
        <shortName evidence="1">GSA 1</shortName>
        <ecNumber evidence="1">5.4.3.8</ecNumber>
    </recommendedName>
    <alternativeName>
        <fullName evidence="1">Glutamate-1-semialdehyde aminotransferase 1</fullName>
        <shortName evidence="1">GSA-AT 1</shortName>
    </alternativeName>
</protein>
<proteinExistence type="inferred from homology"/>
<evidence type="ECO:0000255" key="1">
    <source>
        <dbReference type="HAMAP-Rule" id="MF_00375"/>
    </source>
</evidence>
<feature type="chain" id="PRO_0000382313" description="Glutamate-1-semialdehyde 2,1-aminomutase 1">
    <location>
        <begin position="1"/>
        <end position="432"/>
    </location>
</feature>
<feature type="modified residue" description="N6-(pyridoxal phosphate)lysine" evidence="1">
    <location>
        <position position="272"/>
    </location>
</feature>
<name>GSA1_EXIS2</name>
<reference key="1">
    <citation type="submission" date="2008-04" db="EMBL/GenBank/DDBJ databases">
        <title>Complete sequence of chromosome of Exiguobacterium sibiricum 255-15.</title>
        <authorList>
            <consortium name="US DOE Joint Genome Institute"/>
            <person name="Copeland A."/>
            <person name="Lucas S."/>
            <person name="Lapidus A."/>
            <person name="Glavina del Rio T."/>
            <person name="Dalin E."/>
            <person name="Tice H."/>
            <person name="Bruce D."/>
            <person name="Goodwin L."/>
            <person name="Pitluck S."/>
            <person name="Kiss H."/>
            <person name="Chertkov O."/>
            <person name="Monk C."/>
            <person name="Brettin T."/>
            <person name="Detter J.C."/>
            <person name="Han C."/>
            <person name="Kuske C.R."/>
            <person name="Schmutz J."/>
            <person name="Larimer F."/>
            <person name="Land M."/>
            <person name="Hauser L."/>
            <person name="Kyrpides N."/>
            <person name="Mikhailova N."/>
            <person name="Vishnivetskaya T."/>
            <person name="Rodrigues D.F."/>
            <person name="Gilichinsky D."/>
            <person name="Tiedje J."/>
            <person name="Richardson P."/>
        </authorList>
    </citation>
    <scope>NUCLEOTIDE SEQUENCE [LARGE SCALE GENOMIC DNA]</scope>
    <source>
        <strain>DSM 17290 / CCUG 55495 / CIP 109462 / JCM 13490 / 255-15</strain>
    </source>
</reference>
<gene>
    <name evidence="1" type="primary">hemL1</name>
    <name type="ordered locus">Exig_0658</name>
</gene>
<accession>B1YK58</accession>
<sequence length="432" mass="46637">MSTHTKRPTSESLYEVAQKCIVGGVNSPSRSYKAVGGGAPVYMERGEGAYFYDVDGNRYIDYLAAYGPIITGHGHPHITEAITNASRNGLLYGTPHRLEIDFAHKLQQAIPSLEKVRFTNSGTEAVMTTIRVARAYTGRELVVKFSGCYHGHSDLMLIAAGSGPATLGSPDSAGVTKATAKEVITTPFNDIESYRQIMAEWGDQVACVLVEPIVGNFGIVEPQPGFLEAINEITHEHGALVIYDEVITAFRFTYGSAQELLNIRPDMTALGKIIGGGLPIGAYGGRQDIMEHVAPLGPAYQAGTMAGNPASMAAGIACLELLEQPGVYEEFDRLGAKLEQGILEAADTHGVTITINRLKGALTVYFTDETVVDYLGAERADSEMFGRFFKLMLEQGVNLAPSKYEAWFLTTAHTETDIDETIAAVNRAFAQL</sequence>